<sequence>MPNPFSRTPQSPSQASRKPSVVELLSSPPPLPSPDHDDVHSFSLSRHTSMSSVATGATGDRSRGSVSAGTTSGGVDWSDIKLSELTEPQKLISINSGYTVQEAFKTLVTHNLTSVPVSLSKTDSSDLENCLSFDYSDLNTYLLLLFGRARLDALSVDEINVEGSMSKLEYAQQMVNKAKHGGEVPVDFILRLHPKNPFIKFPEQETLYPAMEALGNGVHRVAITKDSSPHAPITGILSQRRLIKYMWENARRFPSLDFLINSTIQDLNIGSSNPLTIHGDQPLIDALQKMFTERVSSLAVIDRSRCLMGNISIVDVKHVSSSKNQDLLFKSVLNFISYNLSQKGIEAGQDQYPIFHVSNQSSLGRVIAKLVATQSHRLWVVESRQVKHHASSSGGFGSISGTRSGSISGASSAGPVEAALSPQSSSNNSAAAAAAAAASNPSTGSGSVSGSVSGTNSASGTGAGDSGLPGKLIGVVTLTDILGLFAESKYGKKIDPGLARRQRRRSSTSTRSSIDTTQGEIFRKSYTKQEGVFGKE</sequence>
<dbReference type="EMBL" id="CH408160">
    <property type="protein sequence ID" value="EDK40772.2"/>
    <property type="molecule type" value="Genomic_DNA"/>
</dbReference>
<dbReference type="RefSeq" id="XP_001482915.1">
    <property type="nucleotide sequence ID" value="XM_001482865.1"/>
</dbReference>
<dbReference type="SMR" id="A5DNL9"/>
<dbReference type="FunCoup" id="A5DNL9">
    <property type="interactions" value="261"/>
</dbReference>
<dbReference type="STRING" id="294746.A5DNL9"/>
<dbReference type="GeneID" id="5124830"/>
<dbReference type="KEGG" id="pgu:PGUG_04870"/>
<dbReference type="VEuPathDB" id="FungiDB:PGUG_04870"/>
<dbReference type="eggNOG" id="KOG1764">
    <property type="taxonomic scope" value="Eukaryota"/>
</dbReference>
<dbReference type="HOGENOM" id="CLU_024459_1_0_1"/>
<dbReference type="InParanoid" id="A5DNL9"/>
<dbReference type="OMA" id="DWTQISI"/>
<dbReference type="OrthoDB" id="449052at2759"/>
<dbReference type="Proteomes" id="UP000001997">
    <property type="component" value="Unassembled WGS sequence"/>
</dbReference>
<dbReference type="GO" id="GO:0005737">
    <property type="term" value="C:cytoplasm"/>
    <property type="evidence" value="ECO:0007669"/>
    <property type="project" value="UniProtKB-SubCell"/>
</dbReference>
<dbReference type="GO" id="GO:0005634">
    <property type="term" value="C:nucleus"/>
    <property type="evidence" value="ECO:0007669"/>
    <property type="project" value="UniProtKB-SubCell"/>
</dbReference>
<dbReference type="GO" id="GO:0004865">
    <property type="term" value="F:protein serine/threonine phosphatase inhibitor activity"/>
    <property type="evidence" value="ECO:0007669"/>
    <property type="project" value="TreeGrafter"/>
</dbReference>
<dbReference type="GO" id="GO:0042149">
    <property type="term" value="P:cellular response to glucose starvation"/>
    <property type="evidence" value="ECO:0007669"/>
    <property type="project" value="InterPro"/>
</dbReference>
<dbReference type="GO" id="GO:0030071">
    <property type="term" value="P:regulation of mitotic metaphase/anaphase transition"/>
    <property type="evidence" value="ECO:0007669"/>
    <property type="project" value="InterPro"/>
</dbReference>
<dbReference type="Gene3D" id="3.10.580.10">
    <property type="entry name" value="CBS-domain"/>
    <property type="match status" value="2"/>
</dbReference>
<dbReference type="InterPro" id="IPR050511">
    <property type="entry name" value="AMPK_gamma/SDS23_families"/>
</dbReference>
<dbReference type="InterPro" id="IPR000644">
    <property type="entry name" value="CBS_dom"/>
</dbReference>
<dbReference type="InterPro" id="IPR046342">
    <property type="entry name" value="CBS_dom_sf"/>
</dbReference>
<dbReference type="InterPro" id="IPR016711">
    <property type="entry name" value="Ssd23"/>
</dbReference>
<dbReference type="PANTHER" id="PTHR13780">
    <property type="entry name" value="AMP-ACTIVATED PROTEIN KINASE, GAMMA REGULATORY SUBUNIT"/>
    <property type="match status" value="1"/>
</dbReference>
<dbReference type="PANTHER" id="PTHR13780:SF36">
    <property type="entry name" value="CBS DOMAIN-CONTAINING PROTEIN"/>
    <property type="match status" value="1"/>
</dbReference>
<dbReference type="Pfam" id="PF00571">
    <property type="entry name" value="CBS"/>
    <property type="match status" value="1"/>
</dbReference>
<dbReference type="PIRSF" id="PIRSF018148">
    <property type="entry name" value="UCP018148_CBS_YBR214w"/>
    <property type="match status" value="1"/>
</dbReference>
<dbReference type="SMART" id="SM00116">
    <property type="entry name" value="CBS"/>
    <property type="match status" value="2"/>
</dbReference>
<dbReference type="SUPFAM" id="SSF54631">
    <property type="entry name" value="CBS-domain pair"/>
    <property type="match status" value="2"/>
</dbReference>
<dbReference type="PROSITE" id="PS51371">
    <property type="entry name" value="CBS"/>
    <property type="match status" value="2"/>
</dbReference>
<gene>
    <name type="primary">SDS23</name>
    <name type="ORF">PGUG_04870</name>
</gene>
<feature type="chain" id="PRO_0000324957" description="Protein SDS23">
    <location>
        <begin position="1"/>
        <end position="536"/>
    </location>
</feature>
<feature type="domain" description="CBS 1" evidence="2">
    <location>
        <begin position="192"/>
        <end position="255"/>
    </location>
</feature>
<feature type="domain" description="CBS 2" evidence="2">
    <location>
        <begin position="267"/>
        <end position="327"/>
    </location>
</feature>
<feature type="region of interest" description="Disordered" evidence="3">
    <location>
        <begin position="1"/>
        <end position="72"/>
    </location>
</feature>
<feature type="region of interest" description="Disordered" evidence="3">
    <location>
        <begin position="439"/>
        <end position="466"/>
    </location>
</feature>
<feature type="region of interest" description="Disordered" evidence="3">
    <location>
        <begin position="496"/>
        <end position="536"/>
    </location>
</feature>
<feature type="compositionally biased region" description="Polar residues" evidence="3">
    <location>
        <begin position="1"/>
        <end position="17"/>
    </location>
</feature>
<feature type="compositionally biased region" description="Polar residues" evidence="3">
    <location>
        <begin position="42"/>
        <end position="55"/>
    </location>
</feature>
<feature type="compositionally biased region" description="Low complexity" evidence="3">
    <location>
        <begin position="439"/>
        <end position="460"/>
    </location>
</feature>
<protein>
    <recommendedName>
        <fullName>Protein SDS23</fullName>
    </recommendedName>
</protein>
<evidence type="ECO:0000250" key="1"/>
<evidence type="ECO:0000255" key="2">
    <source>
        <dbReference type="PROSITE-ProRule" id="PRU00703"/>
    </source>
</evidence>
<evidence type="ECO:0000256" key="3">
    <source>
        <dbReference type="SAM" id="MobiDB-lite"/>
    </source>
</evidence>
<evidence type="ECO:0000305" key="4"/>
<organism>
    <name type="scientific">Meyerozyma guilliermondii (strain ATCC 6260 / CBS 566 / DSM 6381 / JCM 1539 / NBRC 10279 / NRRL Y-324)</name>
    <name type="common">Yeast</name>
    <name type="synonym">Candida guilliermondii</name>
    <dbReference type="NCBI Taxonomy" id="294746"/>
    <lineage>
        <taxon>Eukaryota</taxon>
        <taxon>Fungi</taxon>
        <taxon>Dikarya</taxon>
        <taxon>Ascomycota</taxon>
        <taxon>Saccharomycotina</taxon>
        <taxon>Pichiomycetes</taxon>
        <taxon>Debaryomycetaceae</taxon>
        <taxon>Meyerozyma</taxon>
    </lineage>
</organism>
<comment type="function">
    <text evidence="1">Involved in DNA replication and cell separation.</text>
</comment>
<comment type="subcellular location">
    <subcellularLocation>
        <location evidence="1">Cytoplasm</location>
    </subcellularLocation>
    <subcellularLocation>
        <location evidence="1">Nucleus</location>
    </subcellularLocation>
</comment>
<comment type="similarity">
    <text evidence="4">Belongs to the SDS23 family.</text>
</comment>
<name>SDS23_PICGU</name>
<accession>A5DNL9</accession>
<keyword id="KW-0129">CBS domain</keyword>
<keyword id="KW-0963">Cytoplasm</keyword>
<keyword id="KW-0539">Nucleus</keyword>
<keyword id="KW-1185">Reference proteome</keyword>
<keyword id="KW-0677">Repeat</keyword>
<reference key="1">
    <citation type="journal article" date="2009" name="Nature">
        <title>Evolution of pathogenicity and sexual reproduction in eight Candida genomes.</title>
        <authorList>
            <person name="Butler G."/>
            <person name="Rasmussen M.D."/>
            <person name="Lin M.F."/>
            <person name="Santos M.A.S."/>
            <person name="Sakthikumar S."/>
            <person name="Munro C.A."/>
            <person name="Rheinbay E."/>
            <person name="Grabherr M."/>
            <person name="Forche A."/>
            <person name="Reedy J.L."/>
            <person name="Agrafioti I."/>
            <person name="Arnaud M.B."/>
            <person name="Bates S."/>
            <person name="Brown A.J.P."/>
            <person name="Brunke S."/>
            <person name="Costanzo M.C."/>
            <person name="Fitzpatrick D.A."/>
            <person name="de Groot P.W.J."/>
            <person name="Harris D."/>
            <person name="Hoyer L.L."/>
            <person name="Hube B."/>
            <person name="Klis F.M."/>
            <person name="Kodira C."/>
            <person name="Lennard N."/>
            <person name="Logue M.E."/>
            <person name="Martin R."/>
            <person name="Neiman A.M."/>
            <person name="Nikolaou E."/>
            <person name="Quail M.A."/>
            <person name="Quinn J."/>
            <person name="Santos M.C."/>
            <person name="Schmitzberger F.F."/>
            <person name="Sherlock G."/>
            <person name="Shah P."/>
            <person name="Silverstein K.A.T."/>
            <person name="Skrzypek M.S."/>
            <person name="Soll D."/>
            <person name="Staggs R."/>
            <person name="Stansfield I."/>
            <person name="Stumpf M.P.H."/>
            <person name="Sudbery P.E."/>
            <person name="Srikantha T."/>
            <person name="Zeng Q."/>
            <person name="Berman J."/>
            <person name="Berriman M."/>
            <person name="Heitman J."/>
            <person name="Gow N.A.R."/>
            <person name="Lorenz M.C."/>
            <person name="Birren B.W."/>
            <person name="Kellis M."/>
            <person name="Cuomo C.A."/>
        </authorList>
    </citation>
    <scope>NUCLEOTIDE SEQUENCE [LARGE SCALE GENOMIC DNA]</scope>
    <source>
        <strain>ATCC 6260 / CBS 566 / DSM 6381 / JCM 1539 / NBRC 10279 / NRRL Y-324</strain>
    </source>
</reference>
<proteinExistence type="inferred from homology"/>